<keyword id="KW-0349">Heme</keyword>
<keyword id="KW-0376">Hydrogen peroxide</keyword>
<keyword id="KW-0408">Iron</keyword>
<keyword id="KW-0479">Metal-binding</keyword>
<keyword id="KW-0560">Oxidoreductase</keyword>
<keyword id="KW-0575">Peroxidase</keyword>
<sequence length="726" mass="80026">MSTSDDIHNTTATGKCPFHQGGHDQSAGGGTTTRDWWPNQLRVDLLNQHSNRSNPLGEDFDYRKEFSKLDYYGLKKDLKALLTESQPWWPADWGSYAGLFIRMAWHGAGTYRSIDGRGGAGRGQQRFAPLNSWPDNVSLDKARRLLWPIKQKYGQKISWADLFILAGNVALENSGFRTFGFGAGREDVWEPDLDVNWGDEKAWLTHRHPEALAKAPLGATEMGLIYVNPEGPDHSGEPLSAAAAIRATFGNMGMNDEETVALIAGGHTLGKTHGAGPTSNVGPDPEAAPIEEQGLGWASTYGSGVGADAITSGLEVVWTQTPTQWSNYFFENLFKYEWVQTRSPAGAIQFEAVDAPEIIPDPFDPSKKRKPTMLVTDLTLRFDPEFEKISRRFLNDPQAFNEAFARAWFKLTHRDMGPKSRYIGPEVPKEDLIWQDPLPQPIYNPTEQDIIDLKFAIADSGLSVSELVSVAWASASTFRGGDKRGGANGARLALMPQRDWDVNAAAVRALPVLEKIQKESGKASLADIIVLAGVVGVEKAASAAGLSIHVPFAPGRVDARQDQTDIEMFELLEPIADGFRNYRARLDVSTTESLLIDKAQQLTLTAPEMTALVGGMRVLGANFDGSKNGVFTDRVGVLSNDFFVNLLDMRYEWKATDESKELFEGRDRETGEVKYTASRADLVFGSNSVLRAVAEVYASSDAHEKFVKDFVAAWVKVMNLDRFDLL</sequence>
<protein>
    <recommendedName>
        <fullName evidence="1">Catalase-peroxidase</fullName>
        <shortName evidence="1">CP</shortName>
        <ecNumber evidence="1">1.11.1.21</ecNumber>
    </recommendedName>
    <alternativeName>
        <fullName evidence="1">Peroxidase/catalase</fullName>
    </alternativeName>
</protein>
<comment type="function">
    <text evidence="1">Bifunctional enzyme with both catalase and broad-spectrum peroxidase activity.</text>
</comment>
<comment type="catalytic activity">
    <reaction evidence="1">
        <text>H2O2 + AH2 = A + 2 H2O</text>
        <dbReference type="Rhea" id="RHEA:30275"/>
        <dbReference type="ChEBI" id="CHEBI:13193"/>
        <dbReference type="ChEBI" id="CHEBI:15377"/>
        <dbReference type="ChEBI" id="CHEBI:16240"/>
        <dbReference type="ChEBI" id="CHEBI:17499"/>
        <dbReference type="EC" id="1.11.1.21"/>
    </reaction>
</comment>
<comment type="catalytic activity">
    <reaction evidence="1">
        <text>2 H2O2 = O2 + 2 H2O</text>
        <dbReference type="Rhea" id="RHEA:20309"/>
        <dbReference type="ChEBI" id="CHEBI:15377"/>
        <dbReference type="ChEBI" id="CHEBI:15379"/>
        <dbReference type="ChEBI" id="CHEBI:16240"/>
        <dbReference type="EC" id="1.11.1.21"/>
    </reaction>
</comment>
<comment type="cofactor">
    <cofactor evidence="1">
        <name>heme b</name>
        <dbReference type="ChEBI" id="CHEBI:60344"/>
    </cofactor>
    <text evidence="1">Binds 1 heme b (iron(II)-protoporphyrin IX) group per dimer.</text>
</comment>
<comment type="subunit">
    <text evidence="1">Homodimer or homotetramer.</text>
</comment>
<comment type="PTM">
    <text evidence="1">Formation of the three residue Trp-Tyr-Met cross-link is important for the catalase, but not the peroxidase activity of the enzyme.</text>
</comment>
<comment type="similarity">
    <text evidence="1">Belongs to the peroxidase family. Peroxidase/catalase subfamily.</text>
</comment>
<organism>
    <name type="scientific">Escherichia coli O6:K15:H31 (strain 536 / UPEC)</name>
    <dbReference type="NCBI Taxonomy" id="362663"/>
    <lineage>
        <taxon>Bacteria</taxon>
        <taxon>Pseudomonadati</taxon>
        <taxon>Pseudomonadota</taxon>
        <taxon>Gammaproteobacteria</taxon>
        <taxon>Enterobacterales</taxon>
        <taxon>Enterobacteriaceae</taxon>
        <taxon>Escherichia</taxon>
    </lineage>
</organism>
<name>KATG_ECOL5</name>
<dbReference type="EC" id="1.11.1.21" evidence="1"/>
<dbReference type="EMBL" id="CP000247">
    <property type="protein sequence ID" value="ABG72112.1"/>
    <property type="molecule type" value="Genomic_DNA"/>
</dbReference>
<dbReference type="RefSeq" id="WP_001296626.1">
    <property type="nucleotide sequence ID" value="NC_008253.1"/>
</dbReference>
<dbReference type="SMR" id="Q0TAB7"/>
<dbReference type="KEGG" id="ecp:ECP_4156"/>
<dbReference type="HOGENOM" id="CLU_025424_2_0_6"/>
<dbReference type="Proteomes" id="UP000009182">
    <property type="component" value="Chromosome"/>
</dbReference>
<dbReference type="GO" id="GO:0005829">
    <property type="term" value="C:cytosol"/>
    <property type="evidence" value="ECO:0007669"/>
    <property type="project" value="TreeGrafter"/>
</dbReference>
<dbReference type="GO" id="GO:0004096">
    <property type="term" value="F:catalase activity"/>
    <property type="evidence" value="ECO:0007669"/>
    <property type="project" value="UniProtKB-UniRule"/>
</dbReference>
<dbReference type="GO" id="GO:0020037">
    <property type="term" value="F:heme binding"/>
    <property type="evidence" value="ECO:0007669"/>
    <property type="project" value="InterPro"/>
</dbReference>
<dbReference type="GO" id="GO:0046872">
    <property type="term" value="F:metal ion binding"/>
    <property type="evidence" value="ECO:0007669"/>
    <property type="project" value="UniProtKB-KW"/>
</dbReference>
<dbReference type="GO" id="GO:0070301">
    <property type="term" value="P:cellular response to hydrogen peroxide"/>
    <property type="evidence" value="ECO:0007669"/>
    <property type="project" value="TreeGrafter"/>
</dbReference>
<dbReference type="GO" id="GO:0042744">
    <property type="term" value="P:hydrogen peroxide catabolic process"/>
    <property type="evidence" value="ECO:0007669"/>
    <property type="project" value="UniProtKB-KW"/>
</dbReference>
<dbReference type="CDD" id="cd08200">
    <property type="entry name" value="catalase_peroxidase_2"/>
    <property type="match status" value="1"/>
</dbReference>
<dbReference type="FunFam" id="1.10.420.10:FF:000002">
    <property type="entry name" value="Catalase-peroxidase"/>
    <property type="match status" value="1"/>
</dbReference>
<dbReference type="FunFam" id="1.10.420.10:FF:000004">
    <property type="entry name" value="Catalase-peroxidase"/>
    <property type="match status" value="1"/>
</dbReference>
<dbReference type="FunFam" id="1.10.520.10:FF:000002">
    <property type="entry name" value="Catalase-peroxidase"/>
    <property type="match status" value="1"/>
</dbReference>
<dbReference type="Gene3D" id="1.10.520.10">
    <property type="match status" value="2"/>
</dbReference>
<dbReference type="Gene3D" id="1.10.420.10">
    <property type="entry name" value="Peroxidase, domain 2"/>
    <property type="match status" value="2"/>
</dbReference>
<dbReference type="HAMAP" id="MF_01961">
    <property type="entry name" value="Catal_peroxid"/>
    <property type="match status" value="1"/>
</dbReference>
<dbReference type="InterPro" id="IPR000763">
    <property type="entry name" value="Catalase_peroxidase"/>
</dbReference>
<dbReference type="InterPro" id="IPR002016">
    <property type="entry name" value="Haem_peroxidase"/>
</dbReference>
<dbReference type="InterPro" id="IPR010255">
    <property type="entry name" value="Haem_peroxidase_sf"/>
</dbReference>
<dbReference type="InterPro" id="IPR019794">
    <property type="entry name" value="Peroxidases_AS"/>
</dbReference>
<dbReference type="InterPro" id="IPR019793">
    <property type="entry name" value="Peroxidases_heam-ligand_BS"/>
</dbReference>
<dbReference type="NCBIfam" id="TIGR00198">
    <property type="entry name" value="cat_per_HPI"/>
    <property type="match status" value="1"/>
</dbReference>
<dbReference type="NCBIfam" id="NF011635">
    <property type="entry name" value="PRK15061.1"/>
    <property type="match status" value="1"/>
</dbReference>
<dbReference type="PANTHER" id="PTHR30555:SF0">
    <property type="entry name" value="CATALASE-PEROXIDASE"/>
    <property type="match status" value="1"/>
</dbReference>
<dbReference type="PANTHER" id="PTHR30555">
    <property type="entry name" value="HYDROPEROXIDASE I, BIFUNCTIONAL CATALASE-PEROXIDASE"/>
    <property type="match status" value="1"/>
</dbReference>
<dbReference type="Pfam" id="PF00141">
    <property type="entry name" value="peroxidase"/>
    <property type="match status" value="2"/>
</dbReference>
<dbReference type="PRINTS" id="PR00460">
    <property type="entry name" value="BPEROXIDASE"/>
</dbReference>
<dbReference type="PRINTS" id="PR00458">
    <property type="entry name" value="PEROXIDASE"/>
</dbReference>
<dbReference type="SUPFAM" id="SSF48113">
    <property type="entry name" value="Heme-dependent peroxidases"/>
    <property type="match status" value="2"/>
</dbReference>
<dbReference type="PROSITE" id="PS00435">
    <property type="entry name" value="PEROXIDASE_1"/>
    <property type="match status" value="1"/>
</dbReference>
<dbReference type="PROSITE" id="PS00436">
    <property type="entry name" value="PEROXIDASE_2"/>
    <property type="match status" value="1"/>
</dbReference>
<dbReference type="PROSITE" id="PS50873">
    <property type="entry name" value="PEROXIDASE_4"/>
    <property type="match status" value="1"/>
</dbReference>
<accession>Q0TAB7</accession>
<feature type="chain" id="PRO_0000354785" description="Catalase-peroxidase">
    <location>
        <begin position="1"/>
        <end position="726"/>
    </location>
</feature>
<feature type="region of interest" description="Disordered" evidence="2">
    <location>
        <begin position="1"/>
        <end position="33"/>
    </location>
</feature>
<feature type="active site" description="Proton acceptor" evidence="1">
    <location>
        <position position="106"/>
    </location>
</feature>
<feature type="binding site" description="axial binding residue" evidence="1">
    <location>
        <position position="267"/>
    </location>
    <ligand>
        <name>heme b</name>
        <dbReference type="ChEBI" id="CHEBI:60344"/>
    </ligand>
    <ligandPart>
        <name>Fe</name>
        <dbReference type="ChEBI" id="CHEBI:18248"/>
    </ligandPart>
</feature>
<feature type="site" description="Transition state stabilizer" evidence="1">
    <location>
        <position position="102"/>
    </location>
</feature>
<feature type="cross-link" description="Tryptophyl-tyrosyl-methioninium (Trp-Tyr) (with M-252)" evidence="1">
    <location>
        <begin position="105"/>
        <end position="226"/>
    </location>
</feature>
<feature type="cross-link" description="Tryptophyl-tyrosyl-methioninium (Tyr-Met) (with W-105)" evidence="1">
    <location>
        <begin position="226"/>
        <end position="252"/>
    </location>
</feature>
<reference key="1">
    <citation type="journal article" date="2006" name="Mol. Microbiol.">
        <title>Role of pathogenicity island-associated integrases in the genome plasticity of uropathogenic Escherichia coli strain 536.</title>
        <authorList>
            <person name="Hochhut B."/>
            <person name="Wilde C."/>
            <person name="Balling G."/>
            <person name="Middendorf B."/>
            <person name="Dobrindt U."/>
            <person name="Brzuszkiewicz E."/>
            <person name="Gottschalk G."/>
            <person name="Carniel E."/>
            <person name="Hacker J."/>
        </authorList>
    </citation>
    <scope>NUCLEOTIDE SEQUENCE [LARGE SCALE GENOMIC DNA]</scope>
    <source>
        <strain>536 / UPEC</strain>
    </source>
</reference>
<proteinExistence type="inferred from homology"/>
<evidence type="ECO:0000255" key="1">
    <source>
        <dbReference type="HAMAP-Rule" id="MF_01961"/>
    </source>
</evidence>
<evidence type="ECO:0000256" key="2">
    <source>
        <dbReference type="SAM" id="MobiDB-lite"/>
    </source>
</evidence>
<gene>
    <name evidence="1" type="primary">katG</name>
    <name type="ordered locus">ECP_4156</name>
</gene>